<keyword id="KW-0030">Aminoacyl-tRNA synthetase</keyword>
<keyword id="KW-0067">ATP-binding</keyword>
<keyword id="KW-0963">Cytoplasm</keyword>
<keyword id="KW-0436">Ligase</keyword>
<keyword id="KW-0547">Nucleotide-binding</keyword>
<keyword id="KW-0648">Protein biosynthesis</keyword>
<accession>B5FAX3</accession>
<evidence type="ECO:0000255" key="1">
    <source>
        <dbReference type="HAMAP-Rule" id="MF_00127"/>
    </source>
</evidence>
<comment type="catalytic activity">
    <reaction evidence="1">
        <text>tRNA(His) + L-histidine + ATP = L-histidyl-tRNA(His) + AMP + diphosphate + H(+)</text>
        <dbReference type="Rhea" id="RHEA:17313"/>
        <dbReference type="Rhea" id="RHEA-COMP:9665"/>
        <dbReference type="Rhea" id="RHEA-COMP:9689"/>
        <dbReference type="ChEBI" id="CHEBI:15378"/>
        <dbReference type="ChEBI" id="CHEBI:30616"/>
        <dbReference type="ChEBI" id="CHEBI:33019"/>
        <dbReference type="ChEBI" id="CHEBI:57595"/>
        <dbReference type="ChEBI" id="CHEBI:78442"/>
        <dbReference type="ChEBI" id="CHEBI:78527"/>
        <dbReference type="ChEBI" id="CHEBI:456215"/>
        <dbReference type="EC" id="6.1.1.21"/>
    </reaction>
</comment>
<comment type="subunit">
    <text evidence="1">Homodimer.</text>
</comment>
<comment type="subcellular location">
    <subcellularLocation>
        <location evidence="1">Cytoplasm</location>
    </subcellularLocation>
</comment>
<comment type="similarity">
    <text evidence="1">Belongs to the class-II aminoacyl-tRNA synthetase family.</text>
</comment>
<proteinExistence type="inferred from homology"/>
<feature type="chain" id="PRO_1000095610" description="Histidine--tRNA ligase">
    <location>
        <begin position="1"/>
        <end position="422"/>
    </location>
</feature>
<organism>
    <name type="scientific">Aliivibrio fischeri (strain MJ11)</name>
    <name type="common">Vibrio fischeri</name>
    <dbReference type="NCBI Taxonomy" id="388396"/>
    <lineage>
        <taxon>Bacteria</taxon>
        <taxon>Pseudomonadati</taxon>
        <taxon>Pseudomonadota</taxon>
        <taxon>Gammaproteobacteria</taxon>
        <taxon>Vibrionales</taxon>
        <taxon>Vibrionaceae</taxon>
        <taxon>Aliivibrio</taxon>
    </lineage>
</organism>
<reference key="1">
    <citation type="submission" date="2008-08" db="EMBL/GenBank/DDBJ databases">
        <title>Complete sequence of Vibrio fischeri strain MJ11.</title>
        <authorList>
            <person name="Mandel M.J."/>
            <person name="Stabb E.V."/>
            <person name="Ruby E.G."/>
            <person name="Ferriera S."/>
            <person name="Johnson J."/>
            <person name="Kravitz S."/>
            <person name="Beeson K."/>
            <person name="Sutton G."/>
            <person name="Rogers Y.-H."/>
            <person name="Friedman R."/>
            <person name="Frazier M."/>
            <person name="Venter J.C."/>
        </authorList>
    </citation>
    <scope>NUCLEOTIDE SEQUENCE [LARGE SCALE GENOMIC DNA]</scope>
    <source>
        <strain>MJ11</strain>
    </source>
</reference>
<dbReference type="EC" id="6.1.1.21" evidence="1"/>
<dbReference type="EMBL" id="CP001139">
    <property type="protein sequence ID" value="ACH67149.1"/>
    <property type="molecule type" value="Genomic_DNA"/>
</dbReference>
<dbReference type="RefSeq" id="WP_005417932.1">
    <property type="nucleotide sequence ID" value="NC_011184.1"/>
</dbReference>
<dbReference type="SMR" id="B5FAX3"/>
<dbReference type="GeneID" id="54163283"/>
<dbReference type="KEGG" id="vfm:VFMJ11_0644"/>
<dbReference type="HOGENOM" id="CLU_025113_1_1_6"/>
<dbReference type="Proteomes" id="UP000001857">
    <property type="component" value="Chromosome I"/>
</dbReference>
<dbReference type="GO" id="GO:0005737">
    <property type="term" value="C:cytoplasm"/>
    <property type="evidence" value="ECO:0007669"/>
    <property type="project" value="UniProtKB-SubCell"/>
</dbReference>
<dbReference type="GO" id="GO:0005524">
    <property type="term" value="F:ATP binding"/>
    <property type="evidence" value="ECO:0007669"/>
    <property type="project" value="UniProtKB-UniRule"/>
</dbReference>
<dbReference type="GO" id="GO:0004821">
    <property type="term" value="F:histidine-tRNA ligase activity"/>
    <property type="evidence" value="ECO:0007669"/>
    <property type="project" value="UniProtKB-UniRule"/>
</dbReference>
<dbReference type="GO" id="GO:0006427">
    <property type="term" value="P:histidyl-tRNA aminoacylation"/>
    <property type="evidence" value="ECO:0007669"/>
    <property type="project" value="UniProtKB-UniRule"/>
</dbReference>
<dbReference type="CDD" id="cd00773">
    <property type="entry name" value="HisRS-like_core"/>
    <property type="match status" value="1"/>
</dbReference>
<dbReference type="CDD" id="cd00859">
    <property type="entry name" value="HisRS_anticodon"/>
    <property type="match status" value="1"/>
</dbReference>
<dbReference type="FunFam" id="3.30.930.10:FF:000005">
    <property type="entry name" value="Histidine--tRNA ligase"/>
    <property type="match status" value="1"/>
</dbReference>
<dbReference type="Gene3D" id="3.40.50.800">
    <property type="entry name" value="Anticodon-binding domain"/>
    <property type="match status" value="1"/>
</dbReference>
<dbReference type="Gene3D" id="3.30.930.10">
    <property type="entry name" value="Bira Bifunctional Protein, Domain 2"/>
    <property type="match status" value="1"/>
</dbReference>
<dbReference type="HAMAP" id="MF_00127">
    <property type="entry name" value="His_tRNA_synth"/>
    <property type="match status" value="1"/>
</dbReference>
<dbReference type="InterPro" id="IPR006195">
    <property type="entry name" value="aa-tRNA-synth_II"/>
</dbReference>
<dbReference type="InterPro" id="IPR045864">
    <property type="entry name" value="aa-tRNA-synth_II/BPL/LPL"/>
</dbReference>
<dbReference type="InterPro" id="IPR004154">
    <property type="entry name" value="Anticodon-bd"/>
</dbReference>
<dbReference type="InterPro" id="IPR036621">
    <property type="entry name" value="Anticodon-bd_dom_sf"/>
</dbReference>
<dbReference type="InterPro" id="IPR015807">
    <property type="entry name" value="His-tRNA-ligase"/>
</dbReference>
<dbReference type="InterPro" id="IPR041715">
    <property type="entry name" value="HisRS-like_core"/>
</dbReference>
<dbReference type="InterPro" id="IPR004516">
    <property type="entry name" value="HisRS/HisZ"/>
</dbReference>
<dbReference type="InterPro" id="IPR033656">
    <property type="entry name" value="HisRS_anticodon"/>
</dbReference>
<dbReference type="NCBIfam" id="TIGR00442">
    <property type="entry name" value="hisS"/>
    <property type="match status" value="1"/>
</dbReference>
<dbReference type="PANTHER" id="PTHR43707:SF1">
    <property type="entry name" value="HISTIDINE--TRNA LIGASE, MITOCHONDRIAL-RELATED"/>
    <property type="match status" value="1"/>
</dbReference>
<dbReference type="PANTHER" id="PTHR43707">
    <property type="entry name" value="HISTIDYL-TRNA SYNTHETASE"/>
    <property type="match status" value="1"/>
</dbReference>
<dbReference type="Pfam" id="PF03129">
    <property type="entry name" value="HGTP_anticodon"/>
    <property type="match status" value="1"/>
</dbReference>
<dbReference type="Pfam" id="PF13393">
    <property type="entry name" value="tRNA-synt_His"/>
    <property type="match status" value="1"/>
</dbReference>
<dbReference type="PIRSF" id="PIRSF001549">
    <property type="entry name" value="His-tRNA_synth"/>
    <property type="match status" value="1"/>
</dbReference>
<dbReference type="SUPFAM" id="SSF52954">
    <property type="entry name" value="Class II aaRS ABD-related"/>
    <property type="match status" value="1"/>
</dbReference>
<dbReference type="SUPFAM" id="SSF55681">
    <property type="entry name" value="Class II aaRS and biotin synthetases"/>
    <property type="match status" value="1"/>
</dbReference>
<dbReference type="PROSITE" id="PS50862">
    <property type="entry name" value="AA_TRNA_LIGASE_II"/>
    <property type="match status" value="1"/>
</dbReference>
<gene>
    <name evidence="1" type="primary">hisS</name>
    <name type="ordered locus">VFMJ11_0644</name>
</gene>
<name>SYH_ALIFM</name>
<sequence>MAKTIQAIRGMNDCLPTQSPLWQKVEGSVKRVISAYGYNEVRMPIVEQTHLFKRAIGEVTDVVEKEMYTFEDRNGDSLTLRPEGTAGCVRAGIENGLLYNQEQRLWYMGPMFRHERPQKGRYRQFHQVGVEVFGLNGPDVDAELIMMTARLWRELGIDQHVRLELNSIGSLEARANYRTALVAFLEQHLDVLDEDCKRRMHTNPMRVLDTKNPDVQAILGDAPKLSEYLDDDSKAHFSGLCELLDAAGIQYQVNERLVRGLDYYNRTVFEWITESLGAQGTVCGGGRYDGLVEQLGGKTTPAVGFAMGLERLVLLMETLELTDVRRSVDVYMVTAGEGTLMAGMKLAESLREQVPGLRVMCHFGGGNFKKQFKRADNAGAAVALILGETEVAEQTVNVKDLRNGEQVTLPQSDVFTKLAELI</sequence>
<protein>
    <recommendedName>
        <fullName evidence="1">Histidine--tRNA ligase</fullName>
        <ecNumber evidence="1">6.1.1.21</ecNumber>
    </recommendedName>
    <alternativeName>
        <fullName evidence="1">Histidyl-tRNA synthetase</fullName>
        <shortName evidence="1">HisRS</shortName>
    </alternativeName>
</protein>